<gene>
    <name type="primary">cspB</name>
</gene>
<accession>P41018</accession>
<sequence>IKWFNSEKGFGFIEVEGQDDVFVHFSAIQGEGFKCLEEGQAVSFEIVEGNRGPQAAN</sequence>
<feature type="chain" id="PRO_0000100294" description="Cold shock protein CspB">
    <location>
        <begin position="1" status="less than"/>
        <end position="57" status="greater than"/>
    </location>
</feature>
<feature type="domain" description="CSD">
    <location>
        <begin position="1" status="less than"/>
        <end position="57" status="greater than"/>
    </location>
</feature>
<feature type="non-terminal residue">
    <location>
        <position position="1"/>
    </location>
</feature>
<feature type="non-terminal residue">
    <location>
        <position position="57"/>
    </location>
</feature>
<protein>
    <recommendedName>
        <fullName>Cold shock protein CspB</fullName>
    </recommendedName>
</protein>
<evidence type="ECO:0000250" key="1"/>
<reference key="1">
    <citation type="journal article" date="1993" name="Gene">
        <title>Mapping of the Bacillus subtilis cspB gene and cloning of its homologs in thermophilic, mesophilic and psychrotrophic bacilli.</title>
        <authorList>
            <person name="Schroeder K."/>
            <person name="Zuber P."/>
            <person name="Willimsky G."/>
            <person name="Wagner B."/>
            <person name="Marahiel M.A."/>
        </authorList>
    </citation>
    <scope>NUCLEOTIDE SEQUENCE [GENOMIC DNA]</scope>
</reference>
<comment type="function">
    <text>Affects cell viability at low temperatures.</text>
</comment>
<comment type="subunit">
    <text>Homodimer.</text>
</comment>
<comment type="subcellular location">
    <subcellularLocation>
        <location>Cytoplasm</location>
    </subcellularLocation>
</comment>
<comment type="induction">
    <text evidence="1">In response to low temperature.</text>
</comment>
<dbReference type="EMBL" id="X73374">
    <property type="protein sequence ID" value="CAA51791.1"/>
    <property type="molecule type" value="Genomic_DNA"/>
</dbReference>
<dbReference type="PIR" id="I40203">
    <property type="entry name" value="I40203"/>
</dbReference>
<dbReference type="SMR" id="P41018"/>
<dbReference type="STRING" id="1459.AF332_11075"/>
<dbReference type="GO" id="GO:0005737">
    <property type="term" value="C:cytoplasm"/>
    <property type="evidence" value="ECO:0007669"/>
    <property type="project" value="UniProtKB-SubCell"/>
</dbReference>
<dbReference type="GO" id="GO:0003677">
    <property type="term" value="F:DNA binding"/>
    <property type="evidence" value="ECO:0007669"/>
    <property type="project" value="UniProtKB-KW"/>
</dbReference>
<dbReference type="CDD" id="cd04458">
    <property type="entry name" value="CSP_CDS"/>
    <property type="match status" value="1"/>
</dbReference>
<dbReference type="FunFam" id="2.40.50.140:FF:000006">
    <property type="entry name" value="Cold shock protein CspC"/>
    <property type="match status" value="1"/>
</dbReference>
<dbReference type="Gene3D" id="6.20.370.130">
    <property type="match status" value="1"/>
</dbReference>
<dbReference type="Gene3D" id="2.40.50.140">
    <property type="entry name" value="Nucleic acid-binding proteins"/>
    <property type="match status" value="1"/>
</dbReference>
<dbReference type="InterPro" id="IPR012156">
    <property type="entry name" value="Cold_shock_CspA"/>
</dbReference>
<dbReference type="InterPro" id="IPR050181">
    <property type="entry name" value="Cold_shock_domain"/>
</dbReference>
<dbReference type="InterPro" id="IPR011129">
    <property type="entry name" value="CSD"/>
</dbReference>
<dbReference type="InterPro" id="IPR019844">
    <property type="entry name" value="CSD_CS"/>
</dbReference>
<dbReference type="InterPro" id="IPR002059">
    <property type="entry name" value="CSP_DNA-bd"/>
</dbReference>
<dbReference type="InterPro" id="IPR012340">
    <property type="entry name" value="NA-bd_OB-fold"/>
</dbReference>
<dbReference type="PANTHER" id="PTHR11544">
    <property type="entry name" value="COLD SHOCK DOMAIN CONTAINING PROTEINS"/>
    <property type="match status" value="1"/>
</dbReference>
<dbReference type="Pfam" id="PF00313">
    <property type="entry name" value="CSD"/>
    <property type="match status" value="1"/>
</dbReference>
<dbReference type="PIRSF" id="PIRSF002599">
    <property type="entry name" value="Cold_shock_A"/>
    <property type="match status" value="1"/>
</dbReference>
<dbReference type="PRINTS" id="PR00050">
    <property type="entry name" value="COLDSHOCK"/>
</dbReference>
<dbReference type="SMART" id="SM00357">
    <property type="entry name" value="CSP"/>
    <property type="match status" value="1"/>
</dbReference>
<dbReference type="SUPFAM" id="SSF50249">
    <property type="entry name" value="Nucleic acid-binding proteins"/>
    <property type="match status" value="1"/>
</dbReference>
<dbReference type="PROSITE" id="PS00352">
    <property type="entry name" value="CSD_1"/>
    <property type="match status" value="1"/>
</dbReference>
<dbReference type="PROSITE" id="PS51857">
    <property type="entry name" value="CSD_2"/>
    <property type="match status" value="1"/>
</dbReference>
<keyword id="KW-0010">Activator</keyword>
<keyword id="KW-0963">Cytoplasm</keyword>
<keyword id="KW-0238">DNA-binding</keyword>
<keyword id="KW-0346">Stress response</keyword>
<keyword id="KW-0804">Transcription</keyword>
<keyword id="KW-0805">Transcription regulation</keyword>
<name>CSPB_SPOGL</name>
<organism>
    <name type="scientific">Sporosarcina globispora</name>
    <name type="common">Bacillus globisporus</name>
    <dbReference type="NCBI Taxonomy" id="1459"/>
    <lineage>
        <taxon>Bacteria</taxon>
        <taxon>Bacillati</taxon>
        <taxon>Bacillota</taxon>
        <taxon>Bacilli</taxon>
        <taxon>Bacillales</taxon>
        <taxon>Caryophanaceae</taxon>
        <taxon>Sporosarcina</taxon>
    </lineage>
</organism>
<proteinExistence type="inferred from homology"/>